<gene>
    <name type="primary">LYST</name>
    <name type="synonym">CHS</name>
    <name type="synonym">CHS1</name>
</gene>
<comment type="function">
    <text evidence="1 6 9 10 11 12">Adapter protein that regulates and/or fission of intracellular vesicles such as lysosomes (PubMed:11984006, PubMed:25216107). Might regulate trafficking of effectors involved in exocytosis (PubMed:25425525). In cytotoxic T-cells and natural killer (NK) cells, has role in the regulation of size, number and exocytosis of lytic granules (PubMed:26478006). In macrophages and dendritic cells, regulates phagosome maturation by controlling the conversion of early phagosomal compartments into late phagosomes (By similarity). In macrophages and dendritic cells, specifically involved in TLR3- and TLR4-induced production of pro-inflammatory cytokines by regulating the endosomal TLR3- TICAM1/TRIF and TLR4- TICAM1/TRIF signaling pathways (PubMed:27881733).</text>
</comment>
<comment type="subunit">
    <text evidence="6">Interacts with CPAP, LIP8 and ZNF521.</text>
</comment>
<comment type="subcellular location">
    <subcellularLocation>
        <location evidence="17">Cytoplasm</location>
    </subcellularLocation>
</comment>
<comment type="alternative products">
    <event type="alternative splicing"/>
    <isoform>
        <id>Q99698-1</id>
        <name>1</name>
        <sequence type="displayed"/>
    </isoform>
    <isoform>
        <id>Q99698-2</id>
        <name>2</name>
        <sequence type="described" ref="VSP_006781 VSP_006782"/>
    </isoform>
    <isoform>
        <id>Q99698-3</id>
        <name>3</name>
        <sequence type="described" ref="VSP_006779 VSP_006780"/>
    </isoform>
    <text>Additional isoforms seem to exist.</text>
</comment>
<comment type="tissue specificity">
    <text evidence="14">Abundantly expressed in adult and fetal thymus, peripheral blood leukocytes, bone marrow and several regions of the adult brain.</text>
</comment>
<comment type="disease" evidence="5 7 8 13">
    <disease id="DI-00295">
        <name>Chediak-Higashi syndrome</name>
        <acronym>CHS</acronym>
        <description>A rare autosomal recessive disorder characterized by hypopigmentation, severe immunologic deficiency, a bleeding tendency, neurologic abnormalities, abnormal intracellular transport to and from the lysosome, and giant inclusion bodies in a variety of cell types. Most patients die at an early age unless they receive an allogeneic hematopoietic stem cell transplant (SCT).</description>
        <dbReference type="MIM" id="214500"/>
    </disease>
    <text>The disease is caused by variants affecting the gene represented in this entry.</text>
</comment>
<comment type="miscellaneous">
    <molecule>Isoform 1</molecule>
    <text>May be produced at very low levels due to a premature stop codon in the mRNA, leading to nonsense-mediated mRNA decay.</text>
</comment>
<comment type="online information" name="LYSTbase">
    <link uri="https://databases.lovd.nl/shared/genes/LYST"/>
    <text>LYST mutation db</text>
</comment>
<comment type="online information" name="Albinism database (ADB)">
    <link uri="http://www.ifpcs.org/albinism/chs1mut.html"/>
    <text>LYST mutations</text>
</comment>
<sequence>MSTDSNSLAREFLTDVNRLCNAVVQRVEAREEEEEETHMATLGQYLVHGRGFLLLTKLNSIIDQALTCREELLTLLLSLLPLVWKIPVQEEKATDFNLPLSADIILTKEKNSSSQRSTQEKLHLEGSALSSQVSAKVNVFRKSRRQRKITHRYSVRDARKTQLSTSDSEANSDEKGIAMNKHRRPHLLHHFLTSFPKQDHPKAKLDRLATKEQTPPDAMALENSREIIPRQGSNTDILSEPAALSVISNMNNSPFDLCHVLLSLLEKVCKFDVTLNHNSPLAASVVPTLTEFLAGFGDCCSLSDNLESRVVSAGWTEEPVALIQRMLFRTVLHLLSVDVSTAEMMPENLRKNLTELLRAALKIRICLEKQPDPFAPRQKKTLQEVQEDFVFSKYRHRALLLPELLEGVLQILICCLQSAASNPFYFSQAMDLVQEFIQHHGFNLFETAVLQMEWLVLRDGVPPEASEHLKALINSVMKIMSTVKKVKSEQLHHSMCTRKRHRRCEYSHFMHHHRDLSGLLVSAFKNQVSKNPFEETADGDVYYPERCCCIAVCAHQCLRLLQQASLSSTCVQILSGVHNIGICCCMDPKSVIIPLLHAFKLPALKNFQQHILNILNKLILDQLGGAEISPKIKKAACNICTVDSDQLAQLEETLQGNLCDAELSSSLSSPSYRFQGILPSSGSEDLLWKWDALKAYQNFVFEEDRLHSIQIANHICNLIQKGNIVVQWKLYNYIFNPVLQRGVELAHHCQHLSVTSAQSHVCSHHNQCLPQDVLQIYVKTLPILLKSRVIRDLFLSCNGVSQIIELNCLNGIRSHSLKAFETLIISLGEQQKDASVPDIDGIDIEQKELSSVHVGTSFHHQQAYSDSPQSLSKFYAGLKEAYPKRRKTVNQDVHINTINLFLCVAFLCVSKEAESDRESANDSEDTSGYDSTASEPLSHMLPCISLESLVLPSPEHMHQAADIWSMCRWIYMLSSVFQKQFYRLGGFRVCHKLIFMIIQKLFRSHKEEQGKKEGDTSVNENQDLNRISQPKRTMKEDLLSLAIKSDPIPSELGSLKKSADSLGKLELQHISSINVEEVSATEAAPEEAKLFTSQESETSLQSIRLLEALLAICLHGARTSQQKMELELPNQNLSVESILFEMRDHLSQSKVIETQLAKPLFDALLRVALGNYSADFEHNDAMTEKSHQSAEELSSQPGDFSEEAEDSQCCSFKLLVEEEGYEADSESNPEDGETQDDGVDLKSETEGFSASSSPNDLLENLTQGEIIYPEICMLELNLLSASKAKLDVLAHVFESFLKIIRQKEKNVFLLMQQGTVKNLLGGFLSILTQDDSDFQACQRVLVDLLVSLMSSRTCSEELTLLLRIFLEKSPCTKILLLGILKIIESDTTMSPSQYLTFPLLHAPNLSNGVSSQKYPGILNSKAMGLLRRARVSRSKKEADRESFPHRLLSSWHIAPVHLPLLGQNCWPHLSEGFSVSLWFNVECIHEAESTTEKGKKIKKRNKSLILPDSSFDGTESDRPEGAEYINPGERLIEEGCIHIISLGSKALMIQVWADPHNATLIFRVCMDSNDDMKAVLLAQVESQENIFLPSKWQHLVLTYLQQPQGKRRIHGKISIWVSGQRKPDVTLDFMLPRKTSLSSDSNKTFCMIGHCLSSQEEFLQLAGKWDLGNLLLFNGAKVGSQEAFYLYACGPNHTSVMPCKYGKPVNDYSKYINKEILRCEQIRELFMTKKDVDIGLLIESLSVVYTTYCPAQYTIYEPVIRLKGQMKTQLSQRPFSSKEVQSILLEPHHLKNLQPTEYKTIQGILHEIGGTGIFVFLFARVVELSSCEETQALALRVILSLIKYNQQRVHELENCNGLSMIHQVLIKQKCIVGFYILKTLLEGCCGEDIIYMNENGEFKLDVDSNAIIQDVKLLEELLLDWKIWSKAEQGVWETLLAALEVLIRADHHQQMFNIKQLLKAQVVHHFLLTCQVLQEYKEGQLTPMPREVCRSFVKIIAEVLGSPPDLELLTIIFNFLLAVHPPTNTYVCHNPTNFYFSLHIDGKIFQEKVRSIMYLRHSSSGGRSLMSPGFMVISPSGFTASPYEGENSSNIIPQQMAAHMLRSRSLPAFPTSSLLTQSQKLTGSLGCSIDRLQNIADTYVATQSKKQNSLGSSDTLKKGKEDAFISSCESAKTVCEMEAVLSAQVSVSDVPKGVLGFPVVKADHKQLGAEPRSEDDSPGDESCPRRPDYLKGLASFQRSHSTIASLGLAFPSQNGSAAVGRWPSLVDRNTDDWENFAYSLGYEPNYNRTASAHSVTEDCLVPICCGLYELLSGVLLILPDVLLEDVMDKLIQADTLLVLVNHPSPAIQQGVIKLLDAYFARASKEQKDKFLKNRGFSLLANQLYLHRGTQELLECFIEMFFGRHIGLDEEFDLEDVRNMGLFQKWSVIPILGLIETSLYDNILLHNALLLLLQILNSCSKVADMLLDNGLLYVLCNTVAALNGLEKNIPMSEYKLLACDIQQLFIAVTIHACSSSGSQYFRVIEDLIVMLGYLQNSKNKRTQNMAVALQLRVLQAAMEFIRTTANHDSENLTDSLQSPSAPHHAVVQKRKSIAGPRKFPLAQTESLLMKMRSVANDELHVMMQRRMSQENPSQATETELAQRLQRLTVLAVNRIIYQEFNSDIIDILRTPENVTQSKTSVFQTEISEENIHHEQSSVFNPFQKEIFTYLVEGFKVSIGSSKASGSKQQWTKILWSCKETFRMQLGRLLVHILSPAHAAQERKQIFEIVHEPNHQEILRDCLSPSLQHGAKLVLYLSELIHNHQGELTEEELGTAELLMNALKLCGHKCIPPSASTKADLIKMIKEEQKKYETEEGVNKAAWQKTVNNNQQSLFQRLDSKSKDISKIAADITQAVSLSQGNERKKVIQHIRGMYKVDLSASRHWQELIQQLTHDRAVWYDPIYYPTSWQLDPTEGPNRERRRLQRCYLTIPNKYLLRDRQKSEDVVKPPLSYLFEDKTHSSFSSTVKDKAASESIRVNRRCISVAPSRETAGELLLGKCGMYFVEDNASDTVESSSLQGELEPASFSWTYEEIKEVHKRWWQLRDNAVEIFLTNGRTLLLAFDNTKVRDDVYHNILTNNLPNLLEYGNITALTNLWYTGQITNFEYLTHLNKHAGRSFNDLMQYPVFPFILADYVSETLDLNDLLIYRNLSKPIAVQYKEKEDRYVDTYKYLEEEYRKGAREDDPMPPVQPYHYGSHYSNSGTVLHFLVRMPPFTKMFLAYQDQSFDIPDRTFHSTNTTWRLSSFESMTDVKELIPEFFYLPEFLVNREGFDFGVRQNGERVNHVNLPPWARNDPRLFILIHRQALESDYVSQNICQWIDLVFGYKQKGKASVQAINVFHPATYFGMDVSAVEDPVQRRALETMIKTYGQTPRQLFHMAHVSRPGAKLNIEGELPAAVGLLVQFAFRETREQVKEITYPSPLSWIKGLKWGEYVGSPSAPVPVVCFSQPHGERFGSLQALPTRAICGLSRNFCLLMTYSKEQGVRSMNSTDIQWSAILSWGYADNILRLKSKQSEPPVNFIQSSQQYQVTSCAWVPDSCQLFTGSKCGVITAYTNRFTSSTPSEIEMETQIHLYGHTEEITSLFVCKPYSILISVSRDGTCIIWDLNRLCYVQSLAGHKSPVTAVSASETSGDIATVCDSAGGGSDLRLWTVNGDLVGHVHCREIICSVAFSNQPEGVSINVIAGGLENGIVRLWSTWDLKPVREITFPKSNKPIISLTFSCDGHHLYTANSDGTVIAWCRKDQQRLKQPMFYSFLSSYAAG</sequence>
<dbReference type="EMBL" id="U84744">
    <property type="protein sequence ID" value="AAB87737.1"/>
    <property type="molecule type" value="mRNA"/>
</dbReference>
<dbReference type="EMBL" id="U67615">
    <property type="protein sequence ID" value="AAB41309.1"/>
    <property type="molecule type" value="mRNA"/>
</dbReference>
<dbReference type="EMBL" id="U72192">
    <property type="protein sequence ID" value="AAB39697.1"/>
    <property type="molecule type" value="mRNA"/>
</dbReference>
<dbReference type="EMBL" id="L77889">
    <property type="protein sequence ID" value="AAB51608.1"/>
    <property type="molecule type" value="mRNA"/>
</dbReference>
<dbReference type="EMBL" id="U70064">
    <property type="protein sequence ID" value="AAB41533.1"/>
    <property type="molecule type" value="mRNA"/>
</dbReference>
<dbReference type="EMBL" id="AL121997">
    <property type="status" value="NOT_ANNOTATED_CDS"/>
    <property type="molecule type" value="Genomic_DNA"/>
</dbReference>
<dbReference type="EMBL" id="AL390765">
    <property type="status" value="NOT_ANNOTATED_CDS"/>
    <property type="molecule type" value="Genomic_DNA"/>
</dbReference>
<dbReference type="CCDS" id="CCDS31062.1">
    <molecule id="Q99698-1"/>
</dbReference>
<dbReference type="RefSeq" id="NP_000072.2">
    <molecule id="Q99698-1"/>
    <property type="nucleotide sequence ID" value="NM_000081.4"/>
</dbReference>
<dbReference type="RefSeq" id="NP_001288294.1">
    <molecule id="Q99698-1"/>
    <property type="nucleotide sequence ID" value="NM_001301365.1"/>
</dbReference>
<dbReference type="SMR" id="Q99698"/>
<dbReference type="BioGRID" id="107552">
    <property type="interactions" value="55"/>
</dbReference>
<dbReference type="FunCoup" id="Q99698">
    <property type="interactions" value="1616"/>
</dbReference>
<dbReference type="IntAct" id="Q99698">
    <property type="interactions" value="32"/>
</dbReference>
<dbReference type="MINT" id="Q99698"/>
<dbReference type="STRING" id="9606.ENSP00000374443"/>
<dbReference type="GlyCosmos" id="Q99698">
    <property type="glycosylation" value="2 sites, 1 glycan"/>
</dbReference>
<dbReference type="GlyGen" id="Q99698">
    <property type="glycosylation" value="3 sites, 1 O-linked glycan (3 sites)"/>
</dbReference>
<dbReference type="iPTMnet" id="Q99698"/>
<dbReference type="PhosphoSitePlus" id="Q99698"/>
<dbReference type="SwissPalm" id="Q99698"/>
<dbReference type="BioMuta" id="LYST"/>
<dbReference type="DMDM" id="76803797"/>
<dbReference type="jPOST" id="Q99698"/>
<dbReference type="MassIVE" id="Q99698"/>
<dbReference type="PaxDb" id="9606-ENSP00000374443"/>
<dbReference type="PeptideAtlas" id="Q99698"/>
<dbReference type="ProteomicsDB" id="78406">
    <molecule id="Q99698-1"/>
</dbReference>
<dbReference type="ProteomicsDB" id="78407">
    <molecule id="Q99698-2"/>
</dbReference>
<dbReference type="ProteomicsDB" id="78408">
    <molecule id="Q99698-3"/>
</dbReference>
<dbReference type="Pumba" id="Q99698"/>
<dbReference type="Antibodypedia" id="34697">
    <property type="antibodies" value="24 antibodies from 12 providers"/>
</dbReference>
<dbReference type="DNASU" id="1130"/>
<dbReference type="Ensembl" id="ENST00000389793.7">
    <molecule id="Q99698-1"/>
    <property type="protein sequence ID" value="ENSP00000374443.2"/>
    <property type="gene ID" value="ENSG00000143669.16"/>
</dbReference>
<dbReference type="Ensembl" id="ENST00000489585.5">
    <molecule id="Q99698-2"/>
    <property type="protein sequence ID" value="ENSP00000513166.1"/>
    <property type="gene ID" value="ENSG00000143669.16"/>
</dbReference>
<dbReference type="GeneID" id="1130"/>
<dbReference type="KEGG" id="hsa:1130"/>
<dbReference type="MANE-Select" id="ENST00000389793.7">
    <property type="protein sequence ID" value="ENSP00000374443.2"/>
    <property type="RefSeq nucleotide sequence ID" value="NM_000081.4"/>
    <property type="RefSeq protein sequence ID" value="NP_000072.2"/>
</dbReference>
<dbReference type="UCSC" id="uc001hxj.4">
    <molecule id="Q99698-1"/>
    <property type="organism name" value="human"/>
</dbReference>
<dbReference type="AGR" id="HGNC:1968"/>
<dbReference type="CTD" id="1130"/>
<dbReference type="DisGeNET" id="1130"/>
<dbReference type="GeneCards" id="LYST"/>
<dbReference type="GeneReviews" id="LYST"/>
<dbReference type="HGNC" id="HGNC:1968">
    <property type="gene designation" value="LYST"/>
</dbReference>
<dbReference type="HPA" id="ENSG00000143669">
    <property type="expression patterns" value="Tissue enhanced (bone)"/>
</dbReference>
<dbReference type="MalaCards" id="LYST"/>
<dbReference type="MIM" id="214500">
    <property type="type" value="phenotype"/>
</dbReference>
<dbReference type="MIM" id="606897">
    <property type="type" value="gene"/>
</dbReference>
<dbReference type="neXtProt" id="NX_Q99698"/>
<dbReference type="OpenTargets" id="ENSG00000143669"/>
<dbReference type="Orphanet" id="352723">
    <property type="disease" value="Attenuated Chediak-Higashi syndrome"/>
</dbReference>
<dbReference type="Orphanet" id="167">
    <property type="disease" value="Chediak-Higashi syndrome"/>
</dbReference>
<dbReference type="PharmGKB" id="PA26500"/>
<dbReference type="VEuPathDB" id="HostDB:ENSG00000143669"/>
<dbReference type="eggNOG" id="KOG1786">
    <property type="taxonomic scope" value="Eukaryota"/>
</dbReference>
<dbReference type="GeneTree" id="ENSGT00940000156359"/>
<dbReference type="HOGENOM" id="CLU_000213_1_0_1"/>
<dbReference type="InParanoid" id="Q99698"/>
<dbReference type="OMA" id="HSQREFN"/>
<dbReference type="OrthoDB" id="26681at2759"/>
<dbReference type="PAN-GO" id="Q99698">
    <property type="GO annotations" value="4 GO annotations based on evolutionary models"/>
</dbReference>
<dbReference type="PhylomeDB" id="Q99698"/>
<dbReference type="TreeFam" id="TF313658"/>
<dbReference type="PathwayCommons" id="Q99698"/>
<dbReference type="SignaLink" id="Q99698"/>
<dbReference type="SIGNOR" id="Q99698"/>
<dbReference type="BioGRID-ORCS" id="1130">
    <property type="hits" value="18 hits in 1147 CRISPR screens"/>
</dbReference>
<dbReference type="CD-CODE" id="DEE660B4">
    <property type="entry name" value="Stress granule"/>
</dbReference>
<dbReference type="ChiTaRS" id="LYST">
    <property type="organism name" value="human"/>
</dbReference>
<dbReference type="GenomeRNAi" id="1130"/>
<dbReference type="Pharos" id="Q99698">
    <property type="development level" value="Tbio"/>
</dbReference>
<dbReference type="PRO" id="PR:Q99698"/>
<dbReference type="Proteomes" id="UP000005640">
    <property type="component" value="Chromosome 1"/>
</dbReference>
<dbReference type="RNAct" id="Q99698">
    <property type="molecule type" value="protein"/>
</dbReference>
<dbReference type="Bgee" id="ENSG00000143669">
    <property type="expression patterns" value="Expressed in monocyte and 193 other cell types or tissues"/>
</dbReference>
<dbReference type="ExpressionAtlas" id="Q99698">
    <property type="expression patterns" value="baseline and differential"/>
</dbReference>
<dbReference type="GO" id="GO:0005737">
    <property type="term" value="C:cytoplasm"/>
    <property type="evidence" value="ECO:0007669"/>
    <property type="project" value="UniProtKB-SubCell"/>
</dbReference>
<dbReference type="GO" id="GO:0015630">
    <property type="term" value="C:microtubule cytoskeleton"/>
    <property type="evidence" value="ECO:0000314"/>
    <property type="project" value="UniProtKB"/>
</dbReference>
<dbReference type="GO" id="GO:0042742">
    <property type="term" value="P:defense response to bacterium"/>
    <property type="evidence" value="ECO:0000250"/>
    <property type="project" value="UniProtKB"/>
</dbReference>
<dbReference type="GO" id="GO:0042832">
    <property type="term" value="P:defense response to protozoan"/>
    <property type="evidence" value="ECO:0000250"/>
    <property type="project" value="UniProtKB"/>
</dbReference>
<dbReference type="GO" id="GO:0051607">
    <property type="term" value="P:defense response to virus"/>
    <property type="evidence" value="ECO:0000250"/>
    <property type="project" value="UniProtKB"/>
</dbReference>
<dbReference type="GO" id="GO:0032510">
    <property type="term" value="P:endosome to lysosome transport via multivesicular body sorting pathway"/>
    <property type="evidence" value="ECO:0000315"/>
    <property type="project" value="UniProtKB"/>
</dbReference>
<dbReference type="GO" id="GO:0030595">
    <property type="term" value="P:leukocyte chemotaxis"/>
    <property type="evidence" value="ECO:0000250"/>
    <property type="project" value="UniProtKB"/>
</dbReference>
<dbReference type="GO" id="GO:0033364">
    <property type="term" value="P:mast cell secretory granule organization"/>
    <property type="evidence" value="ECO:0000250"/>
    <property type="project" value="UniProtKB"/>
</dbReference>
<dbReference type="GO" id="GO:0032438">
    <property type="term" value="P:melanosome organization"/>
    <property type="evidence" value="ECO:0000250"/>
    <property type="project" value="UniProtKB"/>
</dbReference>
<dbReference type="GO" id="GO:0042267">
    <property type="term" value="P:natural killer cell mediated cytotoxicity"/>
    <property type="evidence" value="ECO:0000315"/>
    <property type="project" value="UniProtKB"/>
</dbReference>
<dbReference type="GO" id="GO:0006909">
    <property type="term" value="P:phagocytosis"/>
    <property type="evidence" value="ECO:0007669"/>
    <property type="project" value="UniProtKB-KW"/>
</dbReference>
<dbReference type="GO" id="GO:0043473">
    <property type="term" value="P:pigmentation"/>
    <property type="evidence" value="ECO:0000315"/>
    <property type="project" value="UniProtKB"/>
</dbReference>
<dbReference type="GO" id="GO:0015031">
    <property type="term" value="P:protein transport"/>
    <property type="evidence" value="ECO:0007669"/>
    <property type="project" value="UniProtKB-KW"/>
</dbReference>
<dbReference type="CDD" id="cd06071">
    <property type="entry name" value="Beach"/>
    <property type="match status" value="1"/>
</dbReference>
<dbReference type="CDD" id="cd01201">
    <property type="entry name" value="PH_BEACH"/>
    <property type="match status" value="1"/>
</dbReference>
<dbReference type="FunFam" id="2.130.10.10:FF:000217">
    <property type="entry name" value="Lysosomal trafficking regulator"/>
    <property type="match status" value="1"/>
</dbReference>
<dbReference type="FunFam" id="2.130.10.10:FF:000292">
    <property type="entry name" value="Lysosomal trafficking regulator"/>
    <property type="match status" value="1"/>
</dbReference>
<dbReference type="FunFam" id="1.10.1540.10:FF:000001">
    <property type="entry name" value="neurobeachin isoform X1"/>
    <property type="match status" value="1"/>
</dbReference>
<dbReference type="Gene3D" id="1.10.1540.10">
    <property type="entry name" value="BEACH domain"/>
    <property type="match status" value="1"/>
</dbReference>
<dbReference type="Gene3D" id="2.30.29.30">
    <property type="entry name" value="Pleckstrin-homology domain (PH domain)/Phosphotyrosine-binding domain (PTB)"/>
    <property type="match status" value="1"/>
</dbReference>
<dbReference type="Gene3D" id="2.130.10.10">
    <property type="entry name" value="YVTN repeat-like/Quinoprotein amine dehydrogenase"/>
    <property type="match status" value="2"/>
</dbReference>
<dbReference type="InterPro" id="IPR016024">
    <property type="entry name" value="ARM-type_fold"/>
</dbReference>
<dbReference type="InterPro" id="IPR000409">
    <property type="entry name" value="BEACH_dom"/>
</dbReference>
<dbReference type="InterPro" id="IPR036372">
    <property type="entry name" value="BEACH_dom_sf"/>
</dbReference>
<dbReference type="InterPro" id="IPR050865">
    <property type="entry name" value="BEACH_Domain"/>
</dbReference>
<dbReference type="InterPro" id="IPR023362">
    <property type="entry name" value="PH-BEACH_dom"/>
</dbReference>
<dbReference type="InterPro" id="IPR011993">
    <property type="entry name" value="PH-like_dom_sf"/>
</dbReference>
<dbReference type="InterPro" id="IPR015943">
    <property type="entry name" value="WD40/YVTN_repeat-like_dom_sf"/>
</dbReference>
<dbReference type="InterPro" id="IPR019775">
    <property type="entry name" value="WD40_repeat_CS"/>
</dbReference>
<dbReference type="InterPro" id="IPR036322">
    <property type="entry name" value="WD40_repeat_dom_sf"/>
</dbReference>
<dbReference type="InterPro" id="IPR001680">
    <property type="entry name" value="WD40_rpt"/>
</dbReference>
<dbReference type="PANTHER" id="PTHR13743">
    <property type="entry name" value="BEIGE/BEACH-RELATED"/>
    <property type="match status" value="1"/>
</dbReference>
<dbReference type="PANTHER" id="PTHR13743:SF86">
    <property type="entry name" value="LYSOSOMAL-TRAFFICKING REGULATOR"/>
    <property type="match status" value="1"/>
</dbReference>
<dbReference type="Pfam" id="PF02138">
    <property type="entry name" value="Beach"/>
    <property type="match status" value="1"/>
</dbReference>
<dbReference type="Pfam" id="PF14844">
    <property type="entry name" value="PH_BEACH"/>
    <property type="match status" value="1"/>
</dbReference>
<dbReference type="Pfam" id="PF00400">
    <property type="entry name" value="WD40"/>
    <property type="match status" value="2"/>
</dbReference>
<dbReference type="SMART" id="SM01026">
    <property type="entry name" value="Beach"/>
    <property type="match status" value="1"/>
</dbReference>
<dbReference type="SMART" id="SM00320">
    <property type="entry name" value="WD40"/>
    <property type="match status" value="4"/>
</dbReference>
<dbReference type="SUPFAM" id="SSF48371">
    <property type="entry name" value="ARM repeat"/>
    <property type="match status" value="1"/>
</dbReference>
<dbReference type="SUPFAM" id="SSF81837">
    <property type="entry name" value="BEACH domain"/>
    <property type="match status" value="1"/>
</dbReference>
<dbReference type="SUPFAM" id="SSF50729">
    <property type="entry name" value="PH domain-like"/>
    <property type="match status" value="1"/>
</dbReference>
<dbReference type="SUPFAM" id="SSF50978">
    <property type="entry name" value="WD40 repeat-like"/>
    <property type="match status" value="1"/>
</dbReference>
<dbReference type="PROSITE" id="PS50197">
    <property type="entry name" value="BEACH"/>
    <property type="match status" value="1"/>
</dbReference>
<dbReference type="PROSITE" id="PS51783">
    <property type="entry name" value="PH_BEACH"/>
    <property type="match status" value="1"/>
</dbReference>
<dbReference type="PROSITE" id="PS00678">
    <property type="entry name" value="WD_REPEATS_1"/>
    <property type="match status" value="1"/>
</dbReference>
<dbReference type="PROSITE" id="PS50082">
    <property type="entry name" value="WD_REPEATS_2"/>
    <property type="match status" value="1"/>
</dbReference>
<dbReference type="PROSITE" id="PS50294">
    <property type="entry name" value="WD_REPEATS_REGION"/>
    <property type="match status" value="1"/>
</dbReference>
<name>LYST_HUMAN</name>
<feature type="chain" id="PRO_0000051071" description="Lysosomal-trafficking regulator">
    <location>
        <begin position="1"/>
        <end position="3801"/>
    </location>
</feature>
<feature type="repeat" description="WD 1">
    <location>
        <begin position="662"/>
        <end position="700"/>
    </location>
</feature>
<feature type="repeat" description="WD 2">
    <location>
        <begin position="1582"/>
        <end position="1626"/>
    </location>
</feature>
<feature type="domain" description="BEACH-type PH" evidence="3">
    <location>
        <begin position="3009"/>
        <end position="3115"/>
    </location>
</feature>
<feature type="domain" description="BEACH" evidence="2">
    <location>
        <begin position="3120"/>
        <end position="3422"/>
    </location>
</feature>
<feature type="repeat" description="WD 3">
    <location>
        <begin position="3563"/>
        <end position="3602"/>
    </location>
</feature>
<feature type="repeat" description="WD 4">
    <location>
        <begin position="3614"/>
        <end position="3653"/>
    </location>
</feature>
<feature type="repeat" description="WD 5">
    <location>
        <begin position="3656"/>
        <end position="3699"/>
    </location>
</feature>
<feature type="repeat" description="WD 6">
    <location>
        <begin position="3700"/>
        <end position="3744"/>
    </location>
</feature>
<feature type="repeat" description="WD 7">
    <location>
        <begin position="3749"/>
        <end position="3788"/>
    </location>
</feature>
<feature type="region of interest" description="Disordered" evidence="4">
    <location>
        <begin position="148"/>
        <end position="173"/>
    </location>
</feature>
<feature type="region of interest" description="Disordered" evidence="4">
    <location>
        <begin position="1181"/>
        <end position="1203"/>
    </location>
</feature>
<feature type="region of interest" description="Disordered" evidence="4">
    <location>
        <begin position="1221"/>
        <end position="1256"/>
    </location>
</feature>
<feature type="region of interest" description="Disordered" evidence="4">
    <location>
        <begin position="2205"/>
        <end position="2224"/>
    </location>
</feature>
<feature type="compositionally biased region" description="Basic and acidic residues" evidence="4">
    <location>
        <begin position="1181"/>
        <end position="1190"/>
    </location>
</feature>
<feature type="compositionally biased region" description="Acidic residues" evidence="4">
    <location>
        <begin position="1221"/>
        <end position="1238"/>
    </location>
</feature>
<feature type="compositionally biased region" description="Polar residues" evidence="4">
    <location>
        <begin position="1246"/>
        <end position="1256"/>
    </location>
</feature>
<feature type="compositionally biased region" description="Basic and acidic residues" evidence="4">
    <location>
        <begin position="2205"/>
        <end position="2215"/>
    </location>
</feature>
<feature type="modified residue" description="Phosphoserine" evidence="1">
    <location>
        <position position="164"/>
    </location>
</feature>
<feature type="modified residue" description="Phosphothreonine" evidence="1">
    <location>
        <position position="165"/>
    </location>
</feature>
<feature type="modified residue" description="Phosphoserine" evidence="1">
    <location>
        <position position="166"/>
    </location>
</feature>
<feature type="modified residue" description="Phosphoserine" evidence="1">
    <location>
        <position position="1509"/>
    </location>
</feature>
<feature type="modified residue" description="Phosphoserine" evidence="1">
    <location>
        <position position="1510"/>
    </location>
</feature>
<feature type="modified residue" description="Phosphoserine" evidence="18 19">
    <location>
        <position position="2105"/>
    </location>
</feature>
<feature type="modified residue" description="Phosphoserine" evidence="20">
    <location>
        <position position="2124"/>
    </location>
</feature>
<feature type="modified residue" description="Phosphoserine" evidence="1">
    <location>
        <position position="2213"/>
    </location>
</feature>
<feature type="modified residue" description="Phosphoserine" evidence="1">
    <location>
        <position position="2217"/>
    </location>
</feature>
<feature type="modified residue" description="Phosphoserine" evidence="1">
    <location>
        <position position="2264"/>
    </location>
</feature>
<feature type="splice variant" id="VSP_006779" description="In isoform 3." evidence="16">
    <original>ESDRPEGAEYINPGERL</original>
    <variation>GMMTGLSDLYTKIVFRL</variation>
    <location>
        <begin position="1515"/>
        <end position="1531"/>
    </location>
</feature>
<feature type="splice variant" id="VSP_006780" description="In isoform 3." evidence="16">
    <location>
        <begin position="1532"/>
        <end position="3801"/>
    </location>
</feature>
<feature type="splice variant" id="VSP_006781" description="In isoform 2." evidence="15">
    <original>VCRSFVKIIAEVLG</original>
    <variation>MARSFRRKCGQSCT</variation>
    <location>
        <begin position="1988"/>
        <end position="2001"/>
    </location>
</feature>
<feature type="splice variant" id="VSP_006782" description="In isoform 2." evidence="15">
    <location>
        <begin position="2002"/>
        <end position="3801"/>
    </location>
</feature>
<feature type="sequence variant" id="VAR_022029" description="In dbSNP:rs3768067.">
    <original>H</original>
    <variation>R</variation>
    <location>
        <position position="123"/>
    </location>
</feature>
<feature type="sequence variant" id="VAR_024699" description="In dbSNP:rs7524261.">
    <original>L</original>
    <variation>V</variation>
    <location>
        <position position="192"/>
    </location>
</feature>
<feature type="sequence variant" id="VAR_053404" description="In dbSNP:rs1063129.">
    <original>E</original>
    <variation>G</variation>
    <location>
        <position position="702"/>
    </location>
</feature>
<feature type="sequence variant" id="VAR_053405" description="In dbSNP:rs10465613.">
    <original>S</original>
    <variation>N</variation>
    <location>
        <position position="1017"/>
    </location>
</feature>
<feature type="sequence variant" id="VAR_083515" description="In CHS; dbSNP:rs797044535." evidence="7">
    <location>
        <begin position="1208"/>
        <end position="3801"/>
    </location>
</feature>
<feature type="sequence variant" id="VAR_071512" description="In CHS." evidence="8">
    <original>F</original>
    <variation>V</variation>
    <location>
        <position position="1397"/>
    </location>
</feature>
<feature type="sequence variant" id="VAR_013556" description="In CHS; dbSNP:rs80338657." evidence="5">
    <original>R</original>
    <variation>H</variation>
    <location>
        <position position="1563"/>
    </location>
</feature>
<feature type="sequence variant" id="VAR_083516" description="In CHS; loss of protein expression; dbSNP:rs370441301." evidence="13">
    <original>I</original>
    <variation>V</variation>
    <location>
        <position position="1907"/>
    </location>
</feature>
<feature type="sequence variant" id="VAR_053406" description="In dbSNP:rs6665568.">
    <original>Q</original>
    <variation>H</variation>
    <location>
        <position position="1949"/>
    </location>
</feature>
<feature type="sequence variant" id="VAR_013557" description="In CHS; dbSNP:rs28942077." evidence="5">
    <original>V</original>
    <variation>D</variation>
    <location>
        <position position="1999"/>
    </location>
</feature>
<feature type="sequence variant" id="VAR_060040" description="In dbSNP:rs7541041.">
    <original>T</original>
    <variation>M</variation>
    <location>
        <position position="2116"/>
    </location>
</feature>
<feature type="sequence variant" id="VAR_053407" description="In dbSNP:rs34642241.">
    <original>F</original>
    <variation>Y</variation>
    <location>
        <position position="2598"/>
    </location>
</feature>
<feature type="sequence variant" id="VAR_053408" description="In dbSNP:rs35333195.">
    <original>G</original>
    <variation>D</variation>
    <location>
        <position position="2804"/>
    </location>
</feature>
<feature type="sequence variant" id="VAR_053409" description="In dbSNP:rs2753327.">
    <original>V</original>
    <variation>I</variation>
    <location>
        <position position="2936"/>
    </location>
</feature>
<feature type="sequence variant" id="VAR_083517" description="In CHS; dbSNP:rs1444318368." evidence="7">
    <location>
        <begin position="3668"/>
        <end position="3801"/>
    </location>
</feature>
<feature type="sequence conflict" description="In Ref. 4." evidence="17" ref="4">
    <original>QG</original>
    <variation>AC</variation>
    <location>
        <begin position="1929"/>
        <end position="1930"/>
    </location>
</feature>
<feature type="sequence conflict" description="In Ref. 1." evidence="17" ref="1">
    <original>L</original>
    <variation>V</variation>
    <location>
        <position position="3514"/>
    </location>
</feature>
<protein>
    <recommendedName>
        <fullName>Lysosomal-trafficking regulator</fullName>
    </recommendedName>
    <alternativeName>
        <fullName>Beige homolog</fullName>
    </alternativeName>
</protein>
<proteinExistence type="evidence at protein level"/>
<accession>Q99698</accession>
<accession>O43274</accession>
<accession>Q5T2U9</accession>
<accession>Q96TD7</accession>
<accession>Q96TD8</accession>
<accession>Q99709</accession>
<accession>Q9H133</accession>
<reference key="1">
    <citation type="journal article" date="1996" name="Nat. Genet.">
        <title>Identification and mutation analysis of the complete gene for Chediak-Higashi syndrome.</title>
        <authorList>
            <person name="Nagle D.L."/>
            <person name="Karim M.A."/>
            <person name="Woolf E.A."/>
            <person name="Holmgren L."/>
            <person name="Bork P."/>
            <person name="Misumi D.J."/>
            <person name="McGrail S.H."/>
            <person name="Dussault B.J."/>
            <person name="Perou C.M."/>
            <person name="Boissy R.E."/>
            <person name="Duyk G.M."/>
            <person name="Spritz R.A."/>
            <person name="Moore K.J."/>
        </authorList>
    </citation>
    <scope>NUCLEOTIDE SEQUENCE [MRNA] (ISOFORM 1)</scope>
</reference>
<reference key="2">
    <citation type="journal article" date="1996" name="Nature">
        <title>Identification of the homologous beige and Chediak-Higashi syndrome genes.</title>
        <authorList>
            <person name="Barbosa M.D.F.S."/>
            <person name="Nguyen Q.A."/>
            <person name="Tchernev V.T."/>
            <person name="Ashley J.A."/>
            <person name="Detter J.C."/>
            <person name="Blaydes S.M."/>
            <person name="Brandt S.J."/>
            <person name="Chotai D."/>
            <person name="Hodgman C."/>
            <person name="Solari R.C.E.S."/>
            <person name="Lovett M."/>
            <person name="Kingsmore S.F."/>
        </authorList>
    </citation>
    <scope>NUCLEOTIDE SEQUENCE [MRNA] (ISOFORM 2)</scope>
    <source>
        <tissue>Liver</tissue>
    </source>
</reference>
<reference key="3">
    <citation type="journal article" date="1997" name="Hum. Mol. Genet.">
        <title>Identification of mutations in two major mRNA isoforms of the Chediak-Higashi syndrome gene in human and mouse.</title>
        <authorList>
            <person name="Barbosa M.D.F.S."/>
            <person name="Barrat F.J."/>
            <person name="Tchernev V.T."/>
            <person name="Nguyen Q.A."/>
            <person name="Mishra V.S."/>
            <person name="Colman S.D."/>
            <person name="Pastural E."/>
            <person name="Dufourcq-Lagelouse R."/>
            <person name="Fischer A."/>
            <person name="Holcombe R.F."/>
            <person name="Wallace M.R."/>
            <person name="Brandt S.J."/>
            <person name="De Saint Basile G."/>
            <person name="Kingsmore S.F."/>
        </authorList>
    </citation>
    <scope>NUCLEOTIDE SEQUENCE [MRNA] (ISOFORM 3)</scope>
    <scope>TISSUE SPECIFICITY</scope>
</reference>
<reference key="4">
    <citation type="journal article" date="2006" name="Nature">
        <title>The DNA sequence and biological annotation of human chromosome 1.</title>
        <authorList>
            <person name="Gregory S.G."/>
            <person name="Barlow K.F."/>
            <person name="McLay K.E."/>
            <person name="Kaul R."/>
            <person name="Swarbreck D."/>
            <person name="Dunham A."/>
            <person name="Scott C.E."/>
            <person name="Howe K.L."/>
            <person name="Woodfine K."/>
            <person name="Spencer C.C.A."/>
            <person name="Jones M.C."/>
            <person name="Gillson C."/>
            <person name="Searle S."/>
            <person name="Zhou Y."/>
            <person name="Kokocinski F."/>
            <person name="McDonald L."/>
            <person name="Evans R."/>
            <person name="Phillips K."/>
            <person name="Atkinson A."/>
            <person name="Cooper R."/>
            <person name="Jones C."/>
            <person name="Hall R.E."/>
            <person name="Andrews T.D."/>
            <person name="Lloyd C."/>
            <person name="Ainscough R."/>
            <person name="Almeida J.P."/>
            <person name="Ambrose K.D."/>
            <person name="Anderson F."/>
            <person name="Andrew R.W."/>
            <person name="Ashwell R.I.S."/>
            <person name="Aubin K."/>
            <person name="Babbage A.K."/>
            <person name="Bagguley C.L."/>
            <person name="Bailey J."/>
            <person name="Beasley H."/>
            <person name="Bethel G."/>
            <person name="Bird C.P."/>
            <person name="Bray-Allen S."/>
            <person name="Brown J.Y."/>
            <person name="Brown A.J."/>
            <person name="Buckley D."/>
            <person name="Burton J."/>
            <person name="Bye J."/>
            <person name="Carder C."/>
            <person name="Chapman J.C."/>
            <person name="Clark S.Y."/>
            <person name="Clarke G."/>
            <person name="Clee C."/>
            <person name="Cobley V."/>
            <person name="Collier R.E."/>
            <person name="Corby N."/>
            <person name="Coville G.J."/>
            <person name="Davies J."/>
            <person name="Deadman R."/>
            <person name="Dunn M."/>
            <person name="Earthrowl M."/>
            <person name="Ellington A.G."/>
            <person name="Errington H."/>
            <person name="Frankish A."/>
            <person name="Frankland J."/>
            <person name="French L."/>
            <person name="Garner P."/>
            <person name="Garnett J."/>
            <person name="Gay L."/>
            <person name="Ghori M.R.J."/>
            <person name="Gibson R."/>
            <person name="Gilby L.M."/>
            <person name="Gillett W."/>
            <person name="Glithero R.J."/>
            <person name="Grafham D.V."/>
            <person name="Griffiths C."/>
            <person name="Griffiths-Jones S."/>
            <person name="Grocock R."/>
            <person name="Hammond S."/>
            <person name="Harrison E.S.I."/>
            <person name="Hart E."/>
            <person name="Haugen E."/>
            <person name="Heath P.D."/>
            <person name="Holmes S."/>
            <person name="Holt K."/>
            <person name="Howden P.J."/>
            <person name="Hunt A.R."/>
            <person name="Hunt S.E."/>
            <person name="Hunter G."/>
            <person name="Isherwood J."/>
            <person name="James R."/>
            <person name="Johnson C."/>
            <person name="Johnson D."/>
            <person name="Joy A."/>
            <person name="Kay M."/>
            <person name="Kershaw J.K."/>
            <person name="Kibukawa M."/>
            <person name="Kimberley A.M."/>
            <person name="King A."/>
            <person name="Knights A.J."/>
            <person name="Lad H."/>
            <person name="Laird G."/>
            <person name="Lawlor S."/>
            <person name="Leongamornlert D.A."/>
            <person name="Lloyd D.M."/>
            <person name="Loveland J."/>
            <person name="Lovell J."/>
            <person name="Lush M.J."/>
            <person name="Lyne R."/>
            <person name="Martin S."/>
            <person name="Mashreghi-Mohammadi M."/>
            <person name="Matthews L."/>
            <person name="Matthews N.S.W."/>
            <person name="McLaren S."/>
            <person name="Milne S."/>
            <person name="Mistry S."/>
            <person name="Moore M.J.F."/>
            <person name="Nickerson T."/>
            <person name="O'Dell C.N."/>
            <person name="Oliver K."/>
            <person name="Palmeiri A."/>
            <person name="Palmer S.A."/>
            <person name="Parker A."/>
            <person name="Patel D."/>
            <person name="Pearce A.V."/>
            <person name="Peck A.I."/>
            <person name="Pelan S."/>
            <person name="Phelps K."/>
            <person name="Phillimore B.J."/>
            <person name="Plumb R."/>
            <person name="Rajan J."/>
            <person name="Raymond C."/>
            <person name="Rouse G."/>
            <person name="Saenphimmachak C."/>
            <person name="Sehra H.K."/>
            <person name="Sheridan E."/>
            <person name="Shownkeen R."/>
            <person name="Sims S."/>
            <person name="Skuce C.D."/>
            <person name="Smith M."/>
            <person name="Steward C."/>
            <person name="Subramanian S."/>
            <person name="Sycamore N."/>
            <person name="Tracey A."/>
            <person name="Tromans A."/>
            <person name="Van Helmond Z."/>
            <person name="Wall M."/>
            <person name="Wallis J.M."/>
            <person name="White S."/>
            <person name="Whitehead S.L."/>
            <person name="Wilkinson J.E."/>
            <person name="Willey D.L."/>
            <person name="Williams H."/>
            <person name="Wilming L."/>
            <person name="Wray P.W."/>
            <person name="Wu Z."/>
            <person name="Coulson A."/>
            <person name="Vaudin M."/>
            <person name="Sulston J.E."/>
            <person name="Durbin R.M."/>
            <person name="Hubbard T."/>
            <person name="Wooster R."/>
            <person name="Dunham I."/>
            <person name="Carter N.P."/>
            <person name="McVean G."/>
            <person name="Ross M.T."/>
            <person name="Harrow J."/>
            <person name="Olson M.V."/>
            <person name="Beck S."/>
            <person name="Rogers J."/>
            <person name="Bentley D.R."/>
        </authorList>
    </citation>
    <scope>NUCLEOTIDE SEQUENCE [LARGE SCALE GENOMIC DNA]</scope>
</reference>
<reference key="5">
    <citation type="journal article" date="2002" name="Mol. Med.">
        <title>The Chediak-Higashi protein interacts with SNARE complex and signal transduction proteins.</title>
        <authorList>
            <person name="Tchernev V.T."/>
            <person name="Mansfield T.A."/>
            <person name="Giot L."/>
            <person name="Kumar A.M."/>
            <person name="Nandabalan K."/>
            <person name="Li Y."/>
            <person name="Mishra V.S."/>
            <person name="Detter J.C."/>
            <person name="Rothberg J.M."/>
            <person name="Wallace M.R."/>
            <person name="Southwick F.S."/>
            <person name="Kingsmore S.F."/>
        </authorList>
    </citation>
    <scope>FUNCTION</scope>
    <scope>INTERACTION WITH CPAP; LIP8 AND ZNF521</scope>
</reference>
<reference key="6">
    <citation type="journal article" date="2004" name="Genome Biol.">
        <title>An unappreciated role for RNA surveillance.</title>
        <authorList>
            <person name="Hillman R.T."/>
            <person name="Green R.E."/>
            <person name="Brenner S.E."/>
        </authorList>
    </citation>
    <scope>SPLICE ISOFORM(S) THAT ARE POTENTIAL NMD TARGET(S)</scope>
</reference>
<reference key="7">
    <citation type="journal article" date="2002" name="Am. J. Med. Genet.">
        <title>Apparent genotype-phenotype correlation in childhood, adolescent, and adult Chediak-Higashi syndrome.</title>
        <authorList>
            <person name="Karim M.A."/>
            <person name="Suzuki K."/>
            <person name="Fukai K."/>
            <person name="Oh J."/>
            <person name="Nagle D.L."/>
            <person name="Moore K.J."/>
            <person name="Barbosa E."/>
            <person name="Falik-Borenstein T."/>
            <person name="Filipovich A."/>
            <person name="Ishida Y."/>
            <person name="Kivrikko S."/>
            <person name="Klein C."/>
            <person name="Kreuz F."/>
            <person name="Levin A."/>
            <person name="Miyajima H."/>
            <person name="Regueiro J."/>
            <person name="Russo C."/>
            <person name="Uyama E."/>
            <person name="Vierimaa O."/>
            <person name="Spritz R.A."/>
        </authorList>
    </citation>
    <scope>INVOLVEMENT IN CHS</scope>
    <scope>VARIANTS CHS HIS-1563 AND ASP-1999</scope>
</reference>
<reference key="8">
    <citation type="journal article" date="2008" name="Proc. Natl. Acad. Sci. U.S.A.">
        <title>A quantitative atlas of mitotic phosphorylation.</title>
        <authorList>
            <person name="Dephoure N."/>
            <person name="Zhou C."/>
            <person name="Villen J."/>
            <person name="Beausoleil S.A."/>
            <person name="Bakalarski C.E."/>
            <person name="Elledge S.J."/>
            <person name="Gygi S.P."/>
        </authorList>
    </citation>
    <scope>IDENTIFICATION BY MASS SPECTROMETRY [LARGE SCALE ANALYSIS]</scope>
    <source>
        <tissue>Cervix carcinoma</tissue>
    </source>
</reference>
<reference key="9">
    <citation type="journal article" date="2009" name="Mol. Cell. Proteomics">
        <title>Large-scale proteomics analysis of the human kinome.</title>
        <authorList>
            <person name="Oppermann F.S."/>
            <person name="Gnad F."/>
            <person name="Olsen J.V."/>
            <person name="Hornberger R."/>
            <person name="Greff Z."/>
            <person name="Keri G."/>
            <person name="Mann M."/>
            <person name="Daub H."/>
        </authorList>
    </citation>
    <scope>PHOSPHORYLATION [LARGE SCALE ANALYSIS] AT SER-2105</scope>
    <scope>IDENTIFICATION BY MASS SPECTROMETRY [LARGE SCALE ANALYSIS]</scope>
</reference>
<reference key="10">
    <citation type="journal article" date="2013" name="J. Proteome Res.">
        <title>Toward a comprehensive characterization of a human cancer cell phosphoproteome.</title>
        <authorList>
            <person name="Zhou H."/>
            <person name="Di Palma S."/>
            <person name="Preisinger C."/>
            <person name="Peng M."/>
            <person name="Polat A.N."/>
            <person name="Heck A.J."/>
            <person name="Mohammed S."/>
        </authorList>
    </citation>
    <scope>PHOSPHORYLATION [LARGE SCALE ANALYSIS] AT SER-2105</scope>
    <scope>IDENTIFICATION BY MASS SPECTROMETRY [LARGE SCALE ANALYSIS]</scope>
    <source>
        <tissue>Cervix carcinoma</tissue>
        <tissue>Erythroleukemia</tissue>
    </source>
</reference>
<reference key="11">
    <citation type="journal article" date="2014" name="J. Proteomics">
        <title>An enzyme assisted RP-RPLC approach for in-depth analysis of human liver phosphoproteome.</title>
        <authorList>
            <person name="Bian Y."/>
            <person name="Song C."/>
            <person name="Cheng K."/>
            <person name="Dong M."/>
            <person name="Wang F."/>
            <person name="Huang J."/>
            <person name="Sun D."/>
            <person name="Wang L."/>
            <person name="Ye M."/>
            <person name="Zou H."/>
        </authorList>
    </citation>
    <scope>PHOSPHORYLATION [LARGE SCALE ANALYSIS] AT SER-2124</scope>
    <scope>IDENTIFICATION BY MASS SPECTROMETRY [LARGE SCALE ANALYSIS]</scope>
    <source>
        <tissue>Liver</tissue>
    </source>
</reference>
<reference key="12">
    <citation type="journal article" date="2014" name="Traffic">
        <title>LYST affects lysosome size and quantity, but not trafficking or degradation through autophagy or endocytosis.</title>
        <authorList>
            <person name="Holland P."/>
            <person name="Torgersen M.L."/>
            <person name="Sandvig K."/>
            <person name="Simonsen A."/>
        </authorList>
    </citation>
    <scope>FUNCTION</scope>
</reference>
<reference key="13">
    <citation type="journal article" date="2015" name="Traffic">
        <title>LYST controls the biogenesis of the endosomal compartment required for secretory lysosome function.</title>
        <authorList>
            <person name="Sepulveda F.E."/>
            <person name="Burgess A."/>
            <person name="Heiligenstein X."/>
            <person name="Goudin N."/>
            <person name="Menager M.M."/>
            <person name="Romao M."/>
            <person name="Cote M."/>
            <person name="Mahlaoui N."/>
            <person name="Fischer A."/>
            <person name="Raposo G."/>
            <person name="Menasche G."/>
            <person name="de Saint Basile G."/>
        </authorList>
    </citation>
    <scope>FUNCTION</scope>
</reference>
<reference key="14">
    <citation type="journal article" date="2016" name="J. Allergy Clin. Immunol.">
        <title>Chediak-Higashi syndrome: Lysosomal trafficking regulator domains regulate exocytosis of lytic granules but not cytokine secretion by natural killer cells.</title>
        <authorList>
            <person name="Gil-Krzewska A."/>
            <person name="Wood S.M."/>
            <person name="Murakami Y."/>
            <person name="Nguyen V."/>
            <person name="Chiang S.C.C."/>
            <person name="Cullinane A.R."/>
            <person name="Peruzzi G."/>
            <person name="Gahl W.A."/>
            <person name="Coligan J.E."/>
            <person name="Introne W.J."/>
            <person name="Bryceson Y.T."/>
            <person name="Krzewski K."/>
        </authorList>
    </citation>
    <scope>FUNCTION</scope>
</reference>
<reference key="15">
    <citation type="journal article" date="2017" name="J. Exp. Med.">
        <title>Lysosomal trafficking regulator Lyst links membrane trafficking to toll-like receptor-mediated inflammatory responses.</title>
        <authorList>
            <person name="Westphal A."/>
            <person name="Cheng W."/>
            <person name="Yu J."/>
            <person name="Grassl G."/>
            <person name="Krautkraemer M."/>
            <person name="Holst O."/>
            <person name="Foeger N."/>
            <person name="Lee K.H."/>
        </authorList>
    </citation>
    <scope>FUNCTION</scope>
</reference>
<reference key="16">
    <citation type="journal article" date="2010" name="Case Rep. Med.">
        <title>Two novel mutations identified in an african-american child with chediak-higashi syndrome.</title>
        <authorList>
            <person name="Morrone K."/>
            <person name="Wang Y."/>
            <person name="Huizing M."/>
            <person name="Sutton E."/>
            <person name="White J.G."/>
            <person name="Gahl W.A."/>
            <person name="Moody K."/>
        </authorList>
    </citation>
    <scope>VARIANTS CHS 1208-GLN--GLY-3801 DEL AND 3668-GLU--GLY-3801 DEL</scope>
</reference>
<reference key="17">
    <citation type="journal article" date="2014" name="J. Neurol. Neurosurg. Psych.">
        <title>Autosomal-recessive complicated spastic paraplegia with a novel lysosomal trafficking regulator gene mutation.</title>
        <authorList>
            <person name="Shimazaki H."/>
            <person name="Honda J."/>
            <person name="Naoi T."/>
            <person name="Namekawa M."/>
            <person name="Nakano I."/>
            <person name="Yazaki M."/>
            <person name="Nakamura K."/>
            <person name="Yoshida K."/>
            <person name="Ikeda S."/>
            <person name="Ishiura H."/>
            <person name="Fukuda Y."/>
            <person name="Takahashi Y."/>
            <person name="Goto J."/>
            <person name="Tsuji S."/>
            <person name="Takiyama Y."/>
        </authorList>
    </citation>
    <scope>VARIANT CHS VAL-1397</scope>
</reference>
<reference key="18">
    <citation type="journal article" date="2020" name="BMC Med. Genet.">
        <title>Identification of a compound heterozygote in LYST gene: a case report on Chediak-Higashi syndrome.</title>
        <authorList>
            <person name="Song Y."/>
            <person name="Dong Z."/>
            <person name="Luo S."/>
            <person name="Yang J."/>
            <person name="Lu Y."/>
            <person name="Gao B."/>
            <person name="Fan T."/>
        </authorList>
    </citation>
    <scope>VARIANT CHS VAL-1907</scope>
</reference>
<organism>
    <name type="scientific">Homo sapiens</name>
    <name type="common">Human</name>
    <dbReference type="NCBI Taxonomy" id="9606"/>
    <lineage>
        <taxon>Eukaryota</taxon>
        <taxon>Metazoa</taxon>
        <taxon>Chordata</taxon>
        <taxon>Craniata</taxon>
        <taxon>Vertebrata</taxon>
        <taxon>Euteleostomi</taxon>
        <taxon>Mammalia</taxon>
        <taxon>Eutheria</taxon>
        <taxon>Euarchontoglires</taxon>
        <taxon>Primates</taxon>
        <taxon>Haplorrhini</taxon>
        <taxon>Catarrhini</taxon>
        <taxon>Hominidae</taxon>
        <taxon>Homo</taxon>
    </lineage>
</organism>
<keyword id="KW-0025">Alternative splicing</keyword>
<keyword id="KW-0963">Cytoplasm</keyword>
<keyword id="KW-0225">Disease variant</keyword>
<keyword id="KW-0581">Phagocytosis</keyword>
<keyword id="KW-0597">Phosphoprotein</keyword>
<keyword id="KW-0653">Protein transport</keyword>
<keyword id="KW-1267">Proteomics identification</keyword>
<keyword id="KW-1185">Reference proteome</keyword>
<keyword id="KW-0677">Repeat</keyword>
<keyword id="KW-0813">Transport</keyword>
<keyword id="KW-0853">WD repeat</keyword>
<evidence type="ECO:0000250" key="1">
    <source>
        <dbReference type="UniProtKB" id="P97412"/>
    </source>
</evidence>
<evidence type="ECO:0000255" key="2">
    <source>
        <dbReference type="PROSITE-ProRule" id="PRU00026"/>
    </source>
</evidence>
<evidence type="ECO:0000255" key="3">
    <source>
        <dbReference type="PROSITE-ProRule" id="PRU01119"/>
    </source>
</evidence>
<evidence type="ECO:0000256" key="4">
    <source>
        <dbReference type="SAM" id="MobiDB-lite"/>
    </source>
</evidence>
<evidence type="ECO:0000269" key="5">
    <source>
    </source>
</evidence>
<evidence type="ECO:0000269" key="6">
    <source>
    </source>
</evidence>
<evidence type="ECO:0000269" key="7">
    <source>
    </source>
</evidence>
<evidence type="ECO:0000269" key="8">
    <source>
    </source>
</evidence>
<evidence type="ECO:0000269" key="9">
    <source>
    </source>
</evidence>
<evidence type="ECO:0000269" key="10">
    <source>
    </source>
</evidence>
<evidence type="ECO:0000269" key="11">
    <source>
    </source>
</evidence>
<evidence type="ECO:0000269" key="12">
    <source>
    </source>
</evidence>
<evidence type="ECO:0000269" key="13">
    <source>
    </source>
</evidence>
<evidence type="ECO:0000269" key="14">
    <source>
    </source>
</evidence>
<evidence type="ECO:0000303" key="15">
    <source>
    </source>
</evidence>
<evidence type="ECO:0000303" key="16">
    <source>
    </source>
</evidence>
<evidence type="ECO:0000305" key="17"/>
<evidence type="ECO:0007744" key="18">
    <source>
    </source>
</evidence>
<evidence type="ECO:0007744" key="19">
    <source>
    </source>
</evidence>
<evidence type="ECO:0007744" key="20">
    <source>
    </source>
</evidence>